<feature type="chain" id="PRO_0000132112" description="Small ribosomal subunit protein uS13">
    <location>
        <begin position="1"/>
        <end position="119"/>
    </location>
</feature>
<feature type="region of interest" description="Disordered" evidence="2">
    <location>
        <begin position="92"/>
        <end position="119"/>
    </location>
</feature>
<feature type="compositionally biased region" description="Basic residues" evidence="2">
    <location>
        <begin position="92"/>
        <end position="110"/>
    </location>
</feature>
<protein>
    <recommendedName>
        <fullName evidence="1">Small ribosomal subunit protein uS13</fullName>
    </recommendedName>
    <alternativeName>
        <fullName evidence="3">30S ribosomal protein S13</fullName>
    </alternativeName>
</protein>
<proteinExistence type="inferred from homology"/>
<name>RS13_MYCSP</name>
<dbReference type="EMBL" id="L23478">
    <property type="protein sequence ID" value="AAA16205.1"/>
    <property type="molecule type" value="Genomic_DNA"/>
</dbReference>
<dbReference type="SMR" id="P38017"/>
<dbReference type="GO" id="GO:0005829">
    <property type="term" value="C:cytosol"/>
    <property type="evidence" value="ECO:0007669"/>
    <property type="project" value="TreeGrafter"/>
</dbReference>
<dbReference type="GO" id="GO:0015935">
    <property type="term" value="C:small ribosomal subunit"/>
    <property type="evidence" value="ECO:0007669"/>
    <property type="project" value="TreeGrafter"/>
</dbReference>
<dbReference type="GO" id="GO:0019843">
    <property type="term" value="F:rRNA binding"/>
    <property type="evidence" value="ECO:0007669"/>
    <property type="project" value="UniProtKB-UniRule"/>
</dbReference>
<dbReference type="GO" id="GO:0003735">
    <property type="term" value="F:structural constituent of ribosome"/>
    <property type="evidence" value="ECO:0007669"/>
    <property type="project" value="InterPro"/>
</dbReference>
<dbReference type="GO" id="GO:0000049">
    <property type="term" value="F:tRNA binding"/>
    <property type="evidence" value="ECO:0007669"/>
    <property type="project" value="UniProtKB-UniRule"/>
</dbReference>
<dbReference type="GO" id="GO:0006412">
    <property type="term" value="P:translation"/>
    <property type="evidence" value="ECO:0007669"/>
    <property type="project" value="UniProtKB-UniRule"/>
</dbReference>
<dbReference type="FunFam" id="1.10.8.50:FF:000001">
    <property type="entry name" value="30S ribosomal protein S13"/>
    <property type="match status" value="1"/>
</dbReference>
<dbReference type="Gene3D" id="1.10.8.50">
    <property type="match status" value="1"/>
</dbReference>
<dbReference type="Gene3D" id="4.10.910.10">
    <property type="entry name" value="30s ribosomal protein s13, domain 2"/>
    <property type="match status" value="1"/>
</dbReference>
<dbReference type="HAMAP" id="MF_01315">
    <property type="entry name" value="Ribosomal_uS13"/>
    <property type="match status" value="1"/>
</dbReference>
<dbReference type="InterPro" id="IPR027437">
    <property type="entry name" value="Rbsml_uS13_C"/>
</dbReference>
<dbReference type="InterPro" id="IPR001892">
    <property type="entry name" value="Ribosomal_uS13"/>
</dbReference>
<dbReference type="InterPro" id="IPR010979">
    <property type="entry name" value="Ribosomal_uS13-like_H2TH"/>
</dbReference>
<dbReference type="PANTHER" id="PTHR10871">
    <property type="entry name" value="30S RIBOSOMAL PROTEIN S13/40S RIBOSOMAL PROTEIN S18"/>
    <property type="match status" value="1"/>
</dbReference>
<dbReference type="PANTHER" id="PTHR10871:SF1">
    <property type="entry name" value="SMALL RIBOSOMAL SUBUNIT PROTEIN US13M"/>
    <property type="match status" value="1"/>
</dbReference>
<dbReference type="Pfam" id="PF00416">
    <property type="entry name" value="Ribosomal_S13"/>
    <property type="match status" value="1"/>
</dbReference>
<dbReference type="PIRSF" id="PIRSF002134">
    <property type="entry name" value="Ribosomal_S13"/>
    <property type="match status" value="1"/>
</dbReference>
<dbReference type="SUPFAM" id="SSF46946">
    <property type="entry name" value="S13-like H2TH domain"/>
    <property type="match status" value="1"/>
</dbReference>
<dbReference type="PROSITE" id="PS50159">
    <property type="entry name" value="RIBOSOMAL_S13_2"/>
    <property type="match status" value="1"/>
</dbReference>
<organism>
    <name type="scientific">Mycoplasma sp</name>
    <dbReference type="NCBI Taxonomy" id="2108"/>
    <lineage>
        <taxon>Bacteria</taxon>
        <taxon>Bacillati</taxon>
        <taxon>Mycoplasmatota</taxon>
        <taxon>Mollicutes</taxon>
        <taxon>Mycoplasmataceae</taxon>
        <taxon>Mycoplasma</taxon>
    </lineage>
</organism>
<sequence length="119" mass="14050">MARVLNIEIPNNKKARISLTYIFGIGPTIAKQILADANVDGEKRVKELTEEELTRIRDEAKKYTTEGDLKREINLNIKRLMEIKSYRVIRHRKDTCKRSTKKNARTRKGPKKDNRWKER</sequence>
<comment type="function">
    <text evidence="1">Located at the top of the head of the 30S subunit, it contacts several helices of the 16S rRNA. In the 70S ribosome it contacts the 23S rRNA (bridge B1a) and protein L5 of the 50S subunit (bridge B1b), connecting the 2 subunits; these bridges are implicated in subunit movement. Contacts the tRNAs in the A and P-sites.</text>
</comment>
<comment type="subunit">
    <text evidence="1">Part of the 30S ribosomal subunit. Forms a loose heterodimer with protein S19. Forms two bridges to the 50S subunit in the 70S ribosome.</text>
</comment>
<comment type="similarity">
    <text evidence="1">Belongs to the universal ribosomal protein uS13 family.</text>
</comment>
<comment type="caution">
    <text evidence="4">Was originally thought to originate from Chlamydia trachomatis.</text>
</comment>
<accession>P38017</accession>
<keyword id="KW-0687">Ribonucleoprotein</keyword>
<keyword id="KW-0689">Ribosomal protein</keyword>
<keyword id="KW-0694">RNA-binding</keyword>
<keyword id="KW-0699">rRNA-binding</keyword>
<keyword id="KW-0820">tRNA-binding</keyword>
<evidence type="ECO:0000255" key="1">
    <source>
        <dbReference type="HAMAP-Rule" id="MF_01315"/>
    </source>
</evidence>
<evidence type="ECO:0000256" key="2">
    <source>
        <dbReference type="SAM" id="MobiDB-lite"/>
    </source>
</evidence>
<evidence type="ECO:0000305" key="3"/>
<evidence type="ECO:0000305" key="4">
    <source>
    </source>
</evidence>
<gene>
    <name evidence="1" type="primary">rpsM</name>
</gene>
<reference key="1">
    <citation type="journal article" date="1993" name="J. Bacteriol.">
        <title>Cloning and characterization of the RNA polymerase alpha-subunit operon of Chlamydia trachomatis.</title>
        <authorList>
            <person name="Tan M."/>
            <person name="Klein R."/>
            <person name="Grant R."/>
            <person name="Ganem D."/>
            <person name="Engel J.N."/>
        </authorList>
    </citation>
    <scope>NUCLEOTIDE SEQUENCE [GENOMIC DNA]</scope>
</reference>
<reference key="2">
    <citation type="journal article" date="1995" name="J. Bacteriol.">
        <authorList>
            <person name="Tan M."/>
            <person name="Klein R."/>
            <person name="Grant R."/>
            <person name="Ganem D."/>
            <person name="Engel J.N."/>
        </authorList>
    </citation>
    <scope>ERRATUM OF PUBMED:8226662</scope>
    <scope>CORRECTION OF SPECIES OF ORIGIN</scope>
</reference>